<comment type="function">
    <text evidence="1">O-methyltransferase that specifically monomethylates 5'-monophosphate of cytoplasmic histidyl tRNA (tRNA(His)), acting as a capping enzyme by protecting tRNA(His) from cleavage by DICER1. Also able, with less efficiently, to methylate the 5' monophosphate of a subset of pre-miRNAs, acting as a negative regulator of miRNA processing. The 5' monophosphate of pre-miRNAs is recognized by DICER1 and is required for pre-miRNAs processing: methylation at this position reduces the processing of pre-miRNAs by DICER1. Was also reported to mediate dimethylation of pre-miR-145; however dimethylation cannot be reproduced by another group which observes a monomethylation of pre-miR-145.</text>
</comment>
<comment type="catalytic activity">
    <reaction evidence="1">
        <text>a 5'-end 5'-phospho-ribonucleoside-RNA + S-adenosyl-L-methionine = a 5'-end (5'-methylphospho)-ribonucleoside-RNA + S-adenosyl-L-homocysteine</text>
        <dbReference type="Rhea" id="RHEA:58656"/>
        <dbReference type="Rhea" id="RHEA-COMP:15179"/>
        <dbReference type="Rhea" id="RHEA-COMP:15181"/>
        <dbReference type="ChEBI" id="CHEBI:57856"/>
        <dbReference type="ChEBI" id="CHEBI:59789"/>
        <dbReference type="ChEBI" id="CHEBI:138282"/>
        <dbReference type="ChEBI" id="CHEBI:142776"/>
    </reaction>
</comment>
<comment type="catalytic activity">
    <reaction evidence="1">
        <text>a 5'-end 5'-phospho-ribonucleoside-RNA + 2 S-adenosyl-L-methionine = a 5'-end (5'-bismethylphospho)-ribonucleoside-RNA + 2 S-adenosyl-L-homocysteine</text>
        <dbReference type="Rhea" id="RHEA:58640"/>
        <dbReference type="Rhea" id="RHEA-COMP:15179"/>
        <dbReference type="Rhea" id="RHEA-COMP:15182"/>
        <dbReference type="ChEBI" id="CHEBI:57856"/>
        <dbReference type="ChEBI" id="CHEBI:59789"/>
        <dbReference type="ChEBI" id="CHEBI:138282"/>
        <dbReference type="ChEBI" id="CHEBI:142777"/>
    </reaction>
</comment>
<comment type="subunit">
    <text evidence="1">Interacts with DICER1; the interaction may be mediated by RNA.</text>
</comment>
<comment type="subcellular location">
    <subcellularLocation>
        <location evidence="1">Cytoplasm</location>
    </subcellularLocation>
</comment>
<comment type="similarity">
    <text evidence="4">Belongs to the methyltransferase superfamily.</text>
</comment>
<evidence type="ECO:0000250" key="1">
    <source>
        <dbReference type="UniProtKB" id="Q7Z5W3"/>
    </source>
</evidence>
<evidence type="ECO:0000255" key="2">
    <source>
        <dbReference type="PROSITE-ProRule" id="PRU00848"/>
    </source>
</evidence>
<evidence type="ECO:0000256" key="3">
    <source>
        <dbReference type="SAM" id="MobiDB-lite"/>
    </source>
</evidence>
<evidence type="ECO:0000305" key="4"/>
<reference key="1">
    <citation type="submission" date="2004-11" db="EMBL/GenBank/DDBJ databases">
        <authorList>
            <consortium name="The German cDNA consortium"/>
        </authorList>
    </citation>
    <scope>NUCLEOTIDE SEQUENCE [LARGE SCALE MRNA]</scope>
    <source>
        <tissue>Kidney</tissue>
    </source>
</reference>
<proteinExistence type="evidence at transcript level"/>
<protein>
    <recommendedName>
        <fullName evidence="1">RNA 5'-monophosphate methyltransferase</fullName>
        <ecNumber evidence="1">2.1.1.-</ecNumber>
    </recommendedName>
    <alternativeName>
        <fullName>BCDIN3 domain-containing protein</fullName>
    </alternativeName>
</protein>
<gene>
    <name type="primary">BCDIN3D</name>
</gene>
<organism>
    <name type="scientific">Pongo abelii</name>
    <name type="common">Sumatran orangutan</name>
    <name type="synonym">Pongo pygmaeus abelii</name>
    <dbReference type="NCBI Taxonomy" id="9601"/>
    <lineage>
        <taxon>Eukaryota</taxon>
        <taxon>Metazoa</taxon>
        <taxon>Chordata</taxon>
        <taxon>Craniata</taxon>
        <taxon>Vertebrata</taxon>
        <taxon>Euteleostomi</taxon>
        <taxon>Mammalia</taxon>
        <taxon>Eutheria</taxon>
        <taxon>Euarchontoglires</taxon>
        <taxon>Primates</taxon>
        <taxon>Haplorrhini</taxon>
        <taxon>Catarrhini</taxon>
        <taxon>Hominidae</taxon>
        <taxon>Pongo</taxon>
    </lineage>
</organism>
<accession>Q5RFI3</accession>
<dbReference type="EC" id="2.1.1.-" evidence="1"/>
<dbReference type="EMBL" id="CR857173">
    <property type="protein sequence ID" value="CAH89474.1"/>
    <property type="molecule type" value="mRNA"/>
</dbReference>
<dbReference type="RefSeq" id="NP_001124633.1">
    <property type="nucleotide sequence ID" value="NM_001131161.2"/>
</dbReference>
<dbReference type="SMR" id="Q5RFI3"/>
<dbReference type="FunCoup" id="Q5RFI3">
    <property type="interactions" value="2781"/>
</dbReference>
<dbReference type="STRING" id="9601.ENSPPYP00000005136"/>
<dbReference type="GeneID" id="100171472"/>
<dbReference type="KEGG" id="pon:100171472"/>
<dbReference type="CTD" id="144233"/>
<dbReference type="eggNOG" id="KOG2899">
    <property type="taxonomic scope" value="Eukaryota"/>
</dbReference>
<dbReference type="InParanoid" id="Q5RFI3"/>
<dbReference type="OrthoDB" id="273070at2759"/>
<dbReference type="Proteomes" id="UP000001595">
    <property type="component" value="Unplaced"/>
</dbReference>
<dbReference type="GO" id="GO:0005737">
    <property type="term" value="C:cytoplasm"/>
    <property type="evidence" value="ECO:0000250"/>
    <property type="project" value="UniProtKB"/>
</dbReference>
<dbReference type="GO" id="GO:0008173">
    <property type="term" value="F:RNA methyltransferase activity"/>
    <property type="evidence" value="ECO:0000250"/>
    <property type="project" value="UniProtKB"/>
</dbReference>
<dbReference type="GO" id="GO:0090486">
    <property type="term" value="F:small RNA 2'-O-methyltransferase activity"/>
    <property type="evidence" value="ECO:0000250"/>
    <property type="project" value="UniProtKB"/>
</dbReference>
<dbReference type="GO" id="GO:0008175">
    <property type="term" value="F:tRNA methyltransferase activity"/>
    <property type="evidence" value="ECO:0000250"/>
    <property type="project" value="UniProtKB"/>
</dbReference>
<dbReference type="GO" id="GO:2000632">
    <property type="term" value="P:negative regulation of pre-miRNA processing"/>
    <property type="evidence" value="ECO:0000250"/>
    <property type="project" value="UniProtKB"/>
</dbReference>
<dbReference type="GO" id="GO:0030488">
    <property type="term" value="P:tRNA methylation"/>
    <property type="evidence" value="ECO:0000250"/>
    <property type="project" value="UniProtKB"/>
</dbReference>
<dbReference type="FunFam" id="3.40.50.150:FF:000138">
    <property type="entry name" value="BCDIN3 domain containing RNA methyltransferase"/>
    <property type="match status" value="1"/>
</dbReference>
<dbReference type="Gene3D" id="3.40.50.150">
    <property type="entry name" value="Vaccinia Virus protein VP39"/>
    <property type="match status" value="1"/>
</dbReference>
<dbReference type="InterPro" id="IPR039772">
    <property type="entry name" value="Bin3-like"/>
</dbReference>
<dbReference type="InterPro" id="IPR010675">
    <property type="entry name" value="Bin3_C"/>
</dbReference>
<dbReference type="InterPro" id="IPR024160">
    <property type="entry name" value="BIN3_SAM-bd_dom"/>
</dbReference>
<dbReference type="InterPro" id="IPR029063">
    <property type="entry name" value="SAM-dependent_MTases_sf"/>
</dbReference>
<dbReference type="PANTHER" id="PTHR12315">
    <property type="entry name" value="BICOID-INTERACTING PROTEIN RELATED"/>
    <property type="match status" value="1"/>
</dbReference>
<dbReference type="PANTHER" id="PTHR12315:SF1">
    <property type="entry name" value="RNA 5'-MONOPHOSPHATE METHYLTRANSFERASE"/>
    <property type="match status" value="1"/>
</dbReference>
<dbReference type="Pfam" id="PF06859">
    <property type="entry name" value="Bin3"/>
    <property type="match status" value="1"/>
</dbReference>
<dbReference type="SUPFAM" id="SSF53335">
    <property type="entry name" value="S-adenosyl-L-methionine-dependent methyltransferases"/>
    <property type="match status" value="1"/>
</dbReference>
<dbReference type="PROSITE" id="PS51515">
    <property type="entry name" value="BIN3_SAM"/>
    <property type="match status" value="1"/>
</dbReference>
<feature type="chain" id="PRO_0000289267" description="RNA 5'-monophosphate methyltransferase">
    <location>
        <begin position="1"/>
        <end position="292"/>
    </location>
</feature>
<feature type="domain" description="Bin3-type SAM" evidence="2">
    <location>
        <begin position="53"/>
        <end position="274"/>
    </location>
</feature>
<feature type="region of interest" description="Disordered" evidence="3">
    <location>
        <begin position="1"/>
        <end position="20"/>
    </location>
</feature>
<feature type="binding site" evidence="1">
    <location>
        <position position="46"/>
    </location>
    <ligand>
        <name>S-adenosyl-L-methionine</name>
        <dbReference type="ChEBI" id="CHEBI:59789"/>
    </ligand>
</feature>
<feature type="binding site" evidence="1">
    <location>
        <position position="76"/>
    </location>
    <ligand>
        <name>S-adenosyl-L-methionine</name>
        <dbReference type="ChEBI" id="CHEBI:59789"/>
    </ligand>
</feature>
<feature type="binding site" evidence="1">
    <location>
        <position position="110"/>
    </location>
    <ligand>
        <name>S-adenosyl-L-methionine</name>
        <dbReference type="ChEBI" id="CHEBI:59789"/>
    </ligand>
</feature>
<feature type="binding site" evidence="1">
    <location>
        <begin position="135"/>
        <end position="136"/>
    </location>
    <ligand>
        <name>S-adenosyl-L-methionine</name>
        <dbReference type="ChEBI" id="CHEBI:59789"/>
    </ligand>
</feature>
<feature type="binding site" evidence="1">
    <location>
        <position position="164"/>
    </location>
    <ligand>
        <name>S-adenosyl-L-methionine</name>
        <dbReference type="ChEBI" id="CHEBI:59789"/>
    </ligand>
</feature>
<keyword id="KW-0963">Cytoplasm</keyword>
<keyword id="KW-0489">Methyltransferase</keyword>
<keyword id="KW-1185">Reference proteome</keyword>
<keyword id="KW-0949">S-adenosyl-L-methionine</keyword>
<keyword id="KW-0808">Transferase</keyword>
<name>BN3D2_PONAB</name>
<sequence>MAVPTELHGGSVKETAAEKESRVLEPGAAPFGNFPHYSRFHPPEQRLRLLPPELLRQLFPESPENGPILGLDVGCNSGDLSVALYKHFLSLPDGKTCSDASREFRLLCCDIDPVLVKRAEKECPFPDALTFITLDFMNQRTRKVLLSSFLSQFGRSVFDIGFCMSITMWIHLNHGDHGLWEFLARLSSLCRYLLVEPQPWKCYRAAARRLRKLGLHDFDHFHSLTIRGDMPNQIVQILTQDHGMELICCFGNTSWDRSLLLFRAKQTIETHPIPESLIEKGKEKNRLSFQKQ</sequence>